<name>PMM_DROME</name>
<feature type="chain" id="PRO_0000199699" description="Phosphomannomutase">
    <location>
        <begin position="1"/>
        <end position="254"/>
    </location>
</feature>
<feature type="active site" description="Nucleophile" evidence="4">
    <location>
        <position position="16"/>
    </location>
</feature>
<feature type="active site" description="Proton donor/acceptor" evidence="4">
    <location>
        <position position="18"/>
    </location>
</feature>
<feature type="binding site" evidence="4">
    <location>
        <position position="16"/>
    </location>
    <ligand>
        <name>Mg(2+)</name>
        <dbReference type="ChEBI" id="CHEBI:18420"/>
        <label>1</label>
    </ligand>
</feature>
<feature type="binding site" evidence="4">
    <location>
        <position position="18"/>
    </location>
    <ligand>
        <name>Mg(2+)</name>
        <dbReference type="ChEBI" id="CHEBI:18420"/>
        <label>1</label>
    </ligand>
</feature>
<feature type="binding site" evidence="4">
    <location>
        <position position="25"/>
    </location>
    <ligand>
        <name>alpha-D-mannose 1-phosphate</name>
        <dbReference type="ChEBI" id="CHEBI:58409"/>
    </ligand>
</feature>
<feature type="binding site" evidence="4">
    <location>
        <position position="129"/>
    </location>
    <ligand>
        <name>alpha-D-mannose 1-phosphate</name>
        <dbReference type="ChEBI" id="CHEBI:58409"/>
    </ligand>
</feature>
<feature type="binding site" evidence="4">
    <location>
        <position position="140"/>
    </location>
    <ligand>
        <name>alpha-D-mannose 1-phosphate</name>
        <dbReference type="ChEBI" id="CHEBI:58409"/>
    </ligand>
</feature>
<feature type="binding site" evidence="4">
    <location>
        <position position="147"/>
    </location>
    <ligand>
        <name>alpha-D-mannose 1-phosphate</name>
        <dbReference type="ChEBI" id="CHEBI:58409"/>
    </ligand>
</feature>
<feature type="binding site" evidence="4">
    <location>
        <position position="185"/>
    </location>
    <ligand>
        <name>alpha-D-mannose 1-phosphate</name>
        <dbReference type="ChEBI" id="CHEBI:58409"/>
    </ligand>
</feature>
<feature type="binding site" evidence="4">
    <location>
        <position position="187"/>
    </location>
    <ligand>
        <name>alpha-D-mannose 1-phosphate</name>
        <dbReference type="ChEBI" id="CHEBI:58409"/>
    </ligand>
</feature>
<feature type="binding site" evidence="3">
    <location>
        <position position="216"/>
    </location>
    <ligand>
        <name>Mg(2+)</name>
        <dbReference type="ChEBI" id="CHEBI:18420"/>
        <label>1</label>
    </ligand>
</feature>
<feature type="binding site" evidence="3">
    <location>
        <position position="228"/>
    </location>
    <ligand>
        <name>Mg(2+)</name>
        <dbReference type="ChEBI" id="CHEBI:18420"/>
        <label>2</label>
    </ligand>
</feature>
<feature type="binding site" evidence="4">
    <location>
        <position position="230"/>
    </location>
    <ligand>
        <name>Mg(2+)</name>
        <dbReference type="ChEBI" id="CHEBI:18420"/>
        <label>2</label>
    </ligand>
</feature>
<feature type="binding site" evidence="4">
    <location>
        <position position="233"/>
    </location>
    <ligand>
        <name>Mg(2+)</name>
        <dbReference type="ChEBI" id="CHEBI:18420"/>
        <label>2</label>
    </ligand>
</feature>
<organism>
    <name type="scientific">Drosophila melanogaster</name>
    <name type="common">Fruit fly</name>
    <dbReference type="NCBI Taxonomy" id="7227"/>
    <lineage>
        <taxon>Eukaryota</taxon>
        <taxon>Metazoa</taxon>
        <taxon>Ecdysozoa</taxon>
        <taxon>Arthropoda</taxon>
        <taxon>Hexapoda</taxon>
        <taxon>Insecta</taxon>
        <taxon>Pterygota</taxon>
        <taxon>Neoptera</taxon>
        <taxon>Endopterygota</taxon>
        <taxon>Diptera</taxon>
        <taxon>Brachycera</taxon>
        <taxon>Muscomorpha</taxon>
        <taxon>Ephydroidea</taxon>
        <taxon>Drosophilidae</taxon>
        <taxon>Drosophila</taxon>
        <taxon>Sophophora</taxon>
    </lineage>
</organism>
<proteinExistence type="evidence at protein level"/>
<evidence type="ECO:0000250" key="1">
    <source>
        <dbReference type="UniProtKB" id="O15305"/>
    </source>
</evidence>
<evidence type="ECO:0000250" key="2">
    <source>
        <dbReference type="UniProtKB" id="O35621"/>
    </source>
</evidence>
<evidence type="ECO:0000250" key="3">
    <source>
        <dbReference type="UniProtKB" id="P31353"/>
    </source>
</evidence>
<evidence type="ECO:0000250" key="4">
    <source>
        <dbReference type="UniProtKB" id="Q92871"/>
    </source>
</evidence>
<evidence type="ECO:0000269" key="5">
    <source>
    </source>
</evidence>
<evidence type="ECO:0000269" key="6">
    <source>
    </source>
</evidence>
<evidence type="ECO:0000303" key="7">
    <source>
    </source>
</evidence>
<evidence type="ECO:0000305" key="8"/>
<evidence type="ECO:0000312" key="9">
    <source>
        <dbReference type="FlyBase" id="FBgn0036300"/>
    </source>
</evidence>
<dbReference type="EC" id="5.4.2.8" evidence="5"/>
<dbReference type="EMBL" id="AE014296">
    <property type="protein sequence ID" value="AAF49899.1"/>
    <property type="molecule type" value="Genomic_DNA"/>
</dbReference>
<dbReference type="EMBL" id="BT009926">
    <property type="protein sequence ID" value="AAQ22395.1"/>
    <property type="molecule type" value="mRNA"/>
</dbReference>
<dbReference type="RefSeq" id="NP_648589.1">
    <property type="nucleotide sequence ID" value="NM_140332.2"/>
</dbReference>
<dbReference type="SMR" id="Q9VTZ6"/>
<dbReference type="BioGRID" id="64785">
    <property type="interactions" value="2"/>
</dbReference>
<dbReference type="FunCoup" id="Q9VTZ6">
    <property type="interactions" value="1250"/>
</dbReference>
<dbReference type="IntAct" id="Q9VTZ6">
    <property type="interactions" value="3"/>
</dbReference>
<dbReference type="STRING" id="7227.FBpp0075693"/>
<dbReference type="PaxDb" id="7227-FBpp0075693"/>
<dbReference type="DNASU" id="39436"/>
<dbReference type="EnsemblMetazoa" id="FBtr0075961">
    <property type="protein sequence ID" value="FBpp0075693"/>
    <property type="gene ID" value="FBgn0036300"/>
</dbReference>
<dbReference type="GeneID" id="39436"/>
<dbReference type="KEGG" id="dme:Dmel_CG10688"/>
<dbReference type="UCSC" id="CG10688-RA">
    <property type="organism name" value="d. melanogaster"/>
</dbReference>
<dbReference type="AGR" id="FB:FBgn0036300"/>
<dbReference type="CTD" id="5373"/>
<dbReference type="FlyBase" id="FBgn0036300">
    <property type="gene designation" value="Pmm2"/>
</dbReference>
<dbReference type="VEuPathDB" id="VectorBase:FBgn0036300"/>
<dbReference type="eggNOG" id="KOG3189">
    <property type="taxonomic scope" value="Eukaryota"/>
</dbReference>
<dbReference type="GeneTree" id="ENSGT00390000002918"/>
<dbReference type="HOGENOM" id="CLU_065642_0_1_1"/>
<dbReference type="InParanoid" id="Q9VTZ6"/>
<dbReference type="OMA" id="ISHRVYT"/>
<dbReference type="OrthoDB" id="10264771at2759"/>
<dbReference type="PhylomeDB" id="Q9VTZ6"/>
<dbReference type="Reactome" id="R-DME-446205">
    <property type="pathway name" value="Synthesis of GDP-mannose"/>
</dbReference>
<dbReference type="UniPathway" id="UPA00126">
    <property type="reaction ID" value="UER00424"/>
</dbReference>
<dbReference type="BioGRID-ORCS" id="39436">
    <property type="hits" value="1 hit in 3 CRISPR screens"/>
</dbReference>
<dbReference type="GenomeRNAi" id="39436"/>
<dbReference type="PRO" id="PR:Q9VTZ6"/>
<dbReference type="Proteomes" id="UP000000803">
    <property type="component" value="Chromosome 3L"/>
</dbReference>
<dbReference type="Bgee" id="FBgn0036300">
    <property type="expression patterns" value="Expressed in embryonic/larval hemocyte (Drosophila) and 71 other cell types or tissues"/>
</dbReference>
<dbReference type="GO" id="GO:0005829">
    <property type="term" value="C:cytosol"/>
    <property type="evidence" value="ECO:0000318"/>
    <property type="project" value="GO_Central"/>
</dbReference>
<dbReference type="GO" id="GO:0046872">
    <property type="term" value="F:metal ion binding"/>
    <property type="evidence" value="ECO:0007669"/>
    <property type="project" value="UniProtKB-KW"/>
</dbReference>
<dbReference type="GO" id="GO:0004615">
    <property type="term" value="F:phosphomannomutase activity"/>
    <property type="evidence" value="ECO:0000318"/>
    <property type="project" value="GO_Central"/>
</dbReference>
<dbReference type="GO" id="GO:0071456">
    <property type="term" value="P:cellular response to hypoxia"/>
    <property type="evidence" value="ECO:0000315"/>
    <property type="project" value="FlyBase"/>
</dbReference>
<dbReference type="GO" id="GO:0061729">
    <property type="term" value="P:GDP-D-mannose biosynthetic process from fructose-6-phosphate"/>
    <property type="evidence" value="ECO:0000250"/>
    <property type="project" value="FlyBase"/>
</dbReference>
<dbReference type="GO" id="GO:0061728">
    <property type="term" value="P:GDP-mannose biosynthetic process from mannose"/>
    <property type="evidence" value="ECO:0000250"/>
    <property type="project" value="FlyBase"/>
</dbReference>
<dbReference type="GO" id="GO:0006013">
    <property type="term" value="P:mannose metabolic process"/>
    <property type="evidence" value="ECO:0000318"/>
    <property type="project" value="GO_Central"/>
</dbReference>
<dbReference type="GO" id="GO:0006487">
    <property type="term" value="P:protein N-linked glycosylation"/>
    <property type="evidence" value="ECO:0000315"/>
    <property type="project" value="FlyBase"/>
</dbReference>
<dbReference type="CDD" id="cd02585">
    <property type="entry name" value="HAD_PMM"/>
    <property type="match status" value="1"/>
</dbReference>
<dbReference type="FunFam" id="3.30.1240.20:FF:000001">
    <property type="entry name" value="Phosphomannomutase"/>
    <property type="match status" value="1"/>
</dbReference>
<dbReference type="Gene3D" id="3.30.1240.20">
    <property type="match status" value="1"/>
</dbReference>
<dbReference type="Gene3D" id="3.40.50.1000">
    <property type="entry name" value="HAD superfamily/HAD-like"/>
    <property type="match status" value="1"/>
</dbReference>
<dbReference type="InterPro" id="IPR036412">
    <property type="entry name" value="HAD-like_sf"/>
</dbReference>
<dbReference type="InterPro" id="IPR006379">
    <property type="entry name" value="HAD-SF_hydro_IIB"/>
</dbReference>
<dbReference type="InterPro" id="IPR023214">
    <property type="entry name" value="HAD_sf"/>
</dbReference>
<dbReference type="InterPro" id="IPR005002">
    <property type="entry name" value="PMM"/>
</dbReference>
<dbReference type="InterPro" id="IPR043169">
    <property type="entry name" value="PMM_cap"/>
</dbReference>
<dbReference type="NCBIfam" id="TIGR01484">
    <property type="entry name" value="HAD-SF-IIB"/>
    <property type="match status" value="1"/>
</dbReference>
<dbReference type="PANTHER" id="PTHR10466">
    <property type="entry name" value="PHOSPHOMANNOMUTASE"/>
    <property type="match status" value="1"/>
</dbReference>
<dbReference type="PANTHER" id="PTHR10466:SF0">
    <property type="entry name" value="PHOSPHOMANNOMUTASE"/>
    <property type="match status" value="1"/>
</dbReference>
<dbReference type="Pfam" id="PF03332">
    <property type="entry name" value="PMM"/>
    <property type="match status" value="1"/>
</dbReference>
<dbReference type="SFLD" id="SFLDF00445">
    <property type="entry name" value="alpha-phosphomannomutase"/>
    <property type="match status" value="1"/>
</dbReference>
<dbReference type="SFLD" id="SFLDG01140">
    <property type="entry name" value="C2.B:_Phosphomannomutase_and_P"/>
    <property type="match status" value="1"/>
</dbReference>
<dbReference type="SUPFAM" id="SSF56784">
    <property type="entry name" value="HAD-like"/>
    <property type="match status" value="1"/>
</dbReference>
<keyword id="KW-0963">Cytoplasm</keyword>
<keyword id="KW-0413">Isomerase</keyword>
<keyword id="KW-0460">Magnesium</keyword>
<keyword id="KW-0479">Metal-binding</keyword>
<keyword id="KW-1185">Reference proteome</keyword>
<sequence length="254" mass="29667">MTTAALKRDEILLLFDVDGTLTMPRSVVTPEFEEFFYSRVKPRATIGIVGGSDLEKMFEQLNGRKILNEFDFIFPENGLVQIEGGKEVGKQNIIMHLGEETVKRFINFVLRYLSELDVPIKRGTFIEFRNGMMNVCPIGRQCTREERNMFAEYDIEHKVREKMIKDLKQEFADVDLTYSIGGQISFDVFPHGWDKTYCLRHIEAHYKFKEIHFFGDKTEPGGNDYEIYSDPRTISHRVYTPKDTQRILTEILEL</sequence>
<gene>
    <name evidence="7 9" type="primary">Pmm2</name>
    <name evidence="9" type="ORF">CG10688</name>
</gene>
<comment type="function">
    <text evidence="5">Involved in the synthesis of the GDP-mannose and dolichol-phosphate-mannose required for a number of critical mannosyl transfer reactions (PubMed:26940433). Required for maintaining N-linked glycoprotein glycosylation at the neuromuscular junction (NMJ) synaptomatrix, and thus acts in multiple pathways that prevent NMJ structural overgrowth, restrict synaptic bouton differentiation, and limit NMJ neurotransmission strength, in order to maintain viability, coordinate movement, and in adults ensure correct wing positioning (PubMed:26940433). Acts in the NMJ trans-synaptic Wg pathway via glycosylation of synaptic Mmp2 which enables dlp/wg signaling during development (PubMed:26940433).</text>
</comment>
<comment type="catalytic activity">
    <reaction evidence="5">
        <text>alpha-D-mannose 1-phosphate = D-mannose 6-phosphate</text>
        <dbReference type="Rhea" id="RHEA:11140"/>
        <dbReference type="ChEBI" id="CHEBI:58409"/>
        <dbReference type="ChEBI" id="CHEBI:58735"/>
        <dbReference type="EC" id="5.4.2.8"/>
    </reaction>
</comment>
<comment type="pathway">
    <text>Nucleotide-sugar biosynthesis; GDP-alpha-D-mannose biosynthesis; alpha-D-mannose 1-phosphate from D-fructose 6-phosphate: step 2/2.</text>
</comment>
<comment type="subunit">
    <text evidence="4">Homodimer.</text>
</comment>
<comment type="subcellular location">
    <subcellularLocation>
        <location evidence="2">Cytoplasm</location>
    </subcellularLocation>
</comment>
<comment type="disruption phenotype">
    <text evidence="5 6">RNAi-mediated whole-body knockdown is lethal at larval stage with severe developmental delays (PubMed:26940433). RNAi-mediated whole-body knockdown or combined neural and muscle knockdown, reduces N-linked protein glycosylation at the neuromuscular junction (NMJ) leading to NMJ synaptic overelaboration and decreased amplitude of evoked excitatory junction currents (EJCs) (PubMed:26940433). These structural and functional defects at the NMJ impair coordinated movement needed for viability (PubMed:26940433). Loss of N-linked protein glycosylation at the NMJ, reduces levels of synaptic Mmp2 and thereby the synaptic levels of wg and its coreceptor dlp leading to a down-regulation of the trans-synaptic pathway (PubMed:26940433). RNAi-mediated knockdown either in the neurons or in the muscles, also reduces glycosylation at the NMJ and synaptic overelaboration, however there is no decrease in the amplitude of evoked excitatory junction currents (EJCs) and flies die at the adult stage (PubMed:26940433). Adults display held-out wings and exhibit incoordination which impairs walking or flying (PubMed:26940433). RNAi-mediated knockdown in muscles impairs coordinated movement required for pharate adults to properly eclose, resulting in death (PubMed:26940433). In midgut enterocytes, RNAi-mediated knockdown decreases the number of PXo bodies which are organelles that function as intracellular stores of inorganic phosphate (PubMed:37138087).</text>
</comment>
<comment type="similarity">
    <text evidence="8">Belongs to the eukaryotic PMM family.</text>
</comment>
<reference key="1">
    <citation type="journal article" date="2000" name="Science">
        <title>The genome sequence of Drosophila melanogaster.</title>
        <authorList>
            <person name="Adams M.D."/>
            <person name="Celniker S.E."/>
            <person name="Holt R.A."/>
            <person name="Evans C.A."/>
            <person name="Gocayne J.D."/>
            <person name="Amanatides P.G."/>
            <person name="Scherer S.E."/>
            <person name="Li P.W."/>
            <person name="Hoskins R.A."/>
            <person name="Galle R.F."/>
            <person name="George R.A."/>
            <person name="Lewis S.E."/>
            <person name="Richards S."/>
            <person name="Ashburner M."/>
            <person name="Henderson S.N."/>
            <person name="Sutton G.G."/>
            <person name="Wortman J.R."/>
            <person name="Yandell M.D."/>
            <person name="Zhang Q."/>
            <person name="Chen L.X."/>
            <person name="Brandon R.C."/>
            <person name="Rogers Y.-H.C."/>
            <person name="Blazej R.G."/>
            <person name="Champe M."/>
            <person name="Pfeiffer B.D."/>
            <person name="Wan K.H."/>
            <person name="Doyle C."/>
            <person name="Baxter E.G."/>
            <person name="Helt G."/>
            <person name="Nelson C.R."/>
            <person name="Miklos G.L.G."/>
            <person name="Abril J.F."/>
            <person name="Agbayani A."/>
            <person name="An H.-J."/>
            <person name="Andrews-Pfannkoch C."/>
            <person name="Baldwin D."/>
            <person name="Ballew R.M."/>
            <person name="Basu A."/>
            <person name="Baxendale J."/>
            <person name="Bayraktaroglu L."/>
            <person name="Beasley E.M."/>
            <person name="Beeson K.Y."/>
            <person name="Benos P.V."/>
            <person name="Berman B.P."/>
            <person name="Bhandari D."/>
            <person name="Bolshakov S."/>
            <person name="Borkova D."/>
            <person name="Botchan M.R."/>
            <person name="Bouck J."/>
            <person name="Brokstein P."/>
            <person name="Brottier P."/>
            <person name="Burtis K.C."/>
            <person name="Busam D.A."/>
            <person name="Butler H."/>
            <person name="Cadieu E."/>
            <person name="Center A."/>
            <person name="Chandra I."/>
            <person name="Cherry J.M."/>
            <person name="Cawley S."/>
            <person name="Dahlke C."/>
            <person name="Davenport L.B."/>
            <person name="Davies P."/>
            <person name="de Pablos B."/>
            <person name="Delcher A."/>
            <person name="Deng Z."/>
            <person name="Mays A.D."/>
            <person name="Dew I."/>
            <person name="Dietz S.M."/>
            <person name="Dodson K."/>
            <person name="Doup L.E."/>
            <person name="Downes M."/>
            <person name="Dugan-Rocha S."/>
            <person name="Dunkov B.C."/>
            <person name="Dunn P."/>
            <person name="Durbin K.J."/>
            <person name="Evangelista C.C."/>
            <person name="Ferraz C."/>
            <person name="Ferriera S."/>
            <person name="Fleischmann W."/>
            <person name="Fosler C."/>
            <person name="Gabrielian A.E."/>
            <person name="Garg N.S."/>
            <person name="Gelbart W.M."/>
            <person name="Glasser K."/>
            <person name="Glodek A."/>
            <person name="Gong F."/>
            <person name="Gorrell J.H."/>
            <person name="Gu Z."/>
            <person name="Guan P."/>
            <person name="Harris M."/>
            <person name="Harris N.L."/>
            <person name="Harvey D.A."/>
            <person name="Heiman T.J."/>
            <person name="Hernandez J.R."/>
            <person name="Houck J."/>
            <person name="Hostin D."/>
            <person name="Houston K.A."/>
            <person name="Howland T.J."/>
            <person name="Wei M.-H."/>
            <person name="Ibegwam C."/>
            <person name="Jalali M."/>
            <person name="Kalush F."/>
            <person name="Karpen G.H."/>
            <person name="Ke Z."/>
            <person name="Kennison J.A."/>
            <person name="Ketchum K.A."/>
            <person name="Kimmel B.E."/>
            <person name="Kodira C.D."/>
            <person name="Kraft C.L."/>
            <person name="Kravitz S."/>
            <person name="Kulp D."/>
            <person name="Lai Z."/>
            <person name="Lasko P."/>
            <person name="Lei Y."/>
            <person name="Levitsky A.A."/>
            <person name="Li J.H."/>
            <person name="Li Z."/>
            <person name="Liang Y."/>
            <person name="Lin X."/>
            <person name="Liu X."/>
            <person name="Mattei B."/>
            <person name="McIntosh T.C."/>
            <person name="McLeod M.P."/>
            <person name="McPherson D."/>
            <person name="Merkulov G."/>
            <person name="Milshina N.V."/>
            <person name="Mobarry C."/>
            <person name="Morris J."/>
            <person name="Moshrefi A."/>
            <person name="Mount S.M."/>
            <person name="Moy M."/>
            <person name="Murphy B."/>
            <person name="Murphy L."/>
            <person name="Muzny D.M."/>
            <person name="Nelson D.L."/>
            <person name="Nelson D.R."/>
            <person name="Nelson K.A."/>
            <person name="Nixon K."/>
            <person name="Nusskern D.R."/>
            <person name="Pacleb J.M."/>
            <person name="Palazzolo M."/>
            <person name="Pittman G.S."/>
            <person name="Pan S."/>
            <person name="Pollard J."/>
            <person name="Puri V."/>
            <person name="Reese M.G."/>
            <person name="Reinert K."/>
            <person name="Remington K."/>
            <person name="Saunders R.D.C."/>
            <person name="Scheeler F."/>
            <person name="Shen H."/>
            <person name="Shue B.C."/>
            <person name="Siden-Kiamos I."/>
            <person name="Simpson M."/>
            <person name="Skupski M.P."/>
            <person name="Smith T.J."/>
            <person name="Spier E."/>
            <person name="Spradling A.C."/>
            <person name="Stapleton M."/>
            <person name="Strong R."/>
            <person name="Sun E."/>
            <person name="Svirskas R."/>
            <person name="Tector C."/>
            <person name="Turner R."/>
            <person name="Venter E."/>
            <person name="Wang A.H."/>
            <person name="Wang X."/>
            <person name="Wang Z.-Y."/>
            <person name="Wassarman D.A."/>
            <person name="Weinstock G.M."/>
            <person name="Weissenbach J."/>
            <person name="Williams S.M."/>
            <person name="Woodage T."/>
            <person name="Worley K.C."/>
            <person name="Wu D."/>
            <person name="Yang S."/>
            <person name="Yao Q.A."/>
            <person name="Ye J."/>
            <person name="Yeh R.-F."/>
            <person name="Zaveri J.S."/>
            <person name="Zhan M."/>
            <person name="Zhang G."/>
            <person name="Zhao Q."/>
            <person name="Zheng L."/>
            <person name="Zheng X.H."/>
            <person name="Zhong F.N."/>
            <person name="Zhong W."/>
            <person name="Zhou X."/>
            <person name="Zhu S.C."/>
            <person name="Zhu X."/>
            <person name="Smith H.O."/>
            <person name="Gibbs R.A."/>
            <person name="Myers E.W."/>
            <person name="Rubin G.M."/>
            <person name="Venter J.C."/>
        </authorList>
    </citation>
    <scope>NUCLEOTIDE SEQUENCE [LARGE SCALE GENOMIC DNA]</scope>
    <source>
        <strain>Berkeley</strain>
    </source>
</reference>
<reference key="2">
    <citation type="journal article" date="2002" name="Genome Biol.">
        <title>Annotation of the Drosophila melanogaster euchromatic genome: a systematic review.</title>
        <authorList>
            <person name="Misra S."/>
            <person name="Crosby M.A."/>
            <person name="Mungall C.J."/>
            <person name="Matthews B.B."/>
            <person name="Campbell K.S."/>
            <person name="Hradecky P."/>
            <person name="Huang Y."/>
            <person name="Kaminker J.S."/>
            <person name="Millburn G.H."/>
            <person name="Prochnik S.E."/>
            <person name="Smith C.D."/>
            <person name="Tupy J.L."/>
            <person name="Whitfield E.J."/>
            <person name="Bayraktaroglu L."/>
            <person name="Berman B.P."/>
            <person name="Bettencourt B.R."/>
            <person name="Celniker S.E."/>
            <person name="de Grey A.D.N.J."/>
            <person name="Drysdale R.A."/>
            <person name="Harris N.L."/>
            <person name="Richter J."/>
            <person name="Russo S."/>
            <person name="Schroeder A.J."/>
            <person name="Shu S.Q."/>
            <person name="Stapleton M."/>
            <person name="Yamada C."/>
            <person name="Ashburner M."/>
            <person name="Gelbart W.M."/>
            <person name="Rubin G.M."/>
            <person name="Lewis S.E."/>
        </authorList>
    </citation>
    <scope>GENOME REANNOTATION</scope>
    <source>
        <strain>Berkeley</strain>
    </source>
</reference>
<reference key="3">
    <citation type="submission" date="2003-08" db="EMBL/GenBank/DDBJ databases">
        <authorList>
            <person name="Stapleton M."/>
            <person name="Brokstein P."/>
            <person name="Hong L."/>
            <person name="Agbayani A."/>
            <person name="Carlson J.W."/>
            <person name="Champe M."/>
            <person name="Chavez C."/>
            <person name="Dorsett V."/>
            <person name="Dresnek D."/>
            <person name="Farfan D."/>
            <person name="Frise E."/>
            <person name="George R.A."/>
            <person name="Gonzalez M."/>
            <person name="Guarin H."/>
            <person name="Kronmiller B."/>
            <person name="Li P.W."/>
            <person name="Liao G."/>
            <person name="Miranda A."/>
            <person name="Mungall C.J."/>
            <person name="Nunoo J."/>
            <person name="Pacleb J.M."/>
            <person name="Paragas V."/>
            <person name="Park S."/>
            <person name="Patel S."/>
            <person name="Phouanenavong S."/>
            <person name="Wan K.H."/>
            <person name="Yu C."/>
            <person name="Lewis S.E."/>
            <person name="Rubin G.M."/>
            <person name="Celniker S.E."/>
        </authorList>
    </citation>
    <scope>NUCLEOTIDE SEQUENCE [LARGE SCALE MRNA]</scope>
    <source>
        <strain>Berkeley</strain>
        <tissue>Embryo</tissue>
    </source>
</reference>
<reference key="4">
    <citation type="journal article" date="2016" name="Dis. Model. Mech.">
        <title>Synaptic roles for phosphomannomutase type 2 in a new Drosophila congenital disorder of glycosylation disease model.</title>
        <authorList>
            <person name="Parkinson W.M."/>
            <person name="Dookwah M."/>
            <person name="Dear M.L."/>
            <person name="Gatto C.L."/>
            <person name="Aoki K."/>
            <person name="Tiemeyer M."/>
            <person name="Broadie K."/>
        </authorList>
    </citation>
    <scope>FUNCTION</scope>
    <scope>CATALYTIC ACTIVITY</scope>
    <scope>DISRUPTION PHENOTYPE</scope>
</reference>
<reference key="5">
    <citation type="journal article" date="2023" name="Nature">
        <title>A phosphate-sensing organelle regulates phosphate and tissue homeostasis.</title>
        <authorList>
            <person name="Xu C."/>
            <person name="Xu J."/>
            <person name="Tang H.W."/>
            <person name="Ericsson M."/>
            <person name="Weng J.H."/>
            <person name="DiRusso J."/>
            <person name="Hu Y."/>
            <person name="Ma W."/>
            <person name="Asara J.M."/>
            <person name="Perrimon N."/>
        </authorList>
    </citation>
    <scope>DISRUPTION PHENOTYPE</scope>
</reference>
<protein>
    <recommendedName>
        <fullName evidence="8">Phosphomannomutase</fullName>
        <ecNumber evidence="5">5.4.2.8</ecNumber>
    </recommendedName>
    <alternativeName>
        <fullName evidence="1">Phosphomannomutase 2</fullName>
    </alternativeName>
    <alternativeName>
        <fullName evidence="7 9">Phosphomannomutase type 2</fullName>
    </alternativeName>
</protein>
<accession>Q9VTZ6</accession>